<name>PDXB_MARMS</name>
<keyword id="KW-0963">Cytoplasm</keyword>
<keyword id="KW-0520">NAD</keyword>
<keyword id="KW-0560">Oxidoreductase</keyword>
<keyword id="KW-0664">Pyridoxine biosynthesis</keyword>
<organism>
    <name type="scientific">Marinomonas sp. (strain MWYL1)</name>
    <dbReference type="NCBI Taxonomy" id="400668"/>
    <lineage>
        <taxon>Bacteria</taxon>
        <taxon>Pseudomonadati</taxon>
        <taxon>Pseudomonadota</taxon>
        <taxon>Gammaproteobacteria</taxon>
        <taxon>Oceanospirillales</taxon>
        <taxon>Oceanospirillaceae</taxon>
        <taxon>Marinomonas</taxon>
    </lineage>
</organism>
<proteinExistence type="inferred from homology"/>
<feature type="chain" id="PRO_1000088422" description="Erythronate-4-phosphate dehydrogenase">
    <location>
        <begin position="1"/>
        <end position="380"/>
    </location>
</feature>
<feature type="active site" evidence="1">
    <location>
        <position position="207"/>
    </location>
</feature>
<feature type="active site" evidence="1">
    <location>
        <position position="237"/>
    </location>
</feature>
<feature type="active site" description="Proton donor" evidence="1">
    <location>
        <position position="254"/>
    </location>
</feature>
<feature type="binding site" evidence="1">
    <location>
        <position position="45"/>
    </location>
    <ligand>
        <name>substrate</name>
    </ligand>
</feature>
<feature type="binding site" evidence="1">
    <location>
        <position position="66"/>
    </location>
    <ligand>
        <name>substrate</name>
    </ligand>
</feature>
<feature type="binding site" evidence="1">
    <location>
        <position position="146"/>
    </location>
    <ligand>
        <name>NAD(+)</name>
        <dbReference type="ChEBI" id="CHEBI:57540"/>
    </ligand>
</feature>
<feature type="binding site" evidence="1">
    <location>
        <position position="232"/>
    </location>
    <ligand>
        <name>NAD(+)</name>
        <dbReference type="ChEBI" id="CHEBI:57540"/>
    </ligand>
</feature>
<feature type="binding site" evidence="1">
    <location>
        <position position="257"/>
    </location>
    <ligand>
        <name>NAD(+)</name>
        <dbReference type="ChEBI" id="CHEBI:57540"/>
    </ligand>
</feature>
<feature type="binding site" evidence="1">
    <location>
        <position position="258"/>
    </location>
    <ligand>
        <name>substrate</name>
    </ligand>
</feature>
<dbReference type="EC" id="1.1.1.290" evidence="1"/>
<dbReference type="EMBL" id="CP000749">
    <property type="protein sequence ID" value="ABR71202.1"/>
    <property type="molecule type" value="Genomic_DNA"/>
</dbReference>
<dbReference type="SMR" id="A6VXM3"/>
<dbReference type="STRING" id="400668.Mmwyl1_2280"/>
<dbReference type="KEGG" id="mmw:Mmwyl1_2280"/>
<dbReference type="eggNOG" id="COG0111">
    <property type="taxonomic scope" value="Bacteria"/>
</dbReference>
<dbReference type="HOGENOM" id="CLU_019796_4_0_6"/>
<dbReference type="OrthoDB" id="9770208at2"/>
<dbReference type="UniPathway" id="UPA00244">
    <property type="reaction ID" value="UER00310"/>
</dbReference>
<dbReference type="GO" id="GO:0005829">
    <property type="term" value="C:cytosol"/>
    <property type="evidence" value="ECO:0007669"/>
    <property type="project" value="TreeGrafter"/>
</dbReference>
<dbReference type="GO" id="GO:0033711">
    <property type="term" value="F:4-phosphoerythronate dehydrogenase activity"/>
    <property type="evidence" value="ECO:0007669"/>
    <property type="project" value="UniProtKB-EC"/>
</dbReference>
<dbReference type="GO" id="GO:0051287">
    <property type="term" value="F:NAD binding"/>
    <property type="evidence" value="ECO:0007669"/>
    <property type="project" value="InterPro"/>
</dbReference>
<dbReference type="GO" id="GO:0046983">
    <property type="term" value="F:protein dimerization activity"/>
    <property type="evidence" value="ECO:0007669"/>
    <property type="project" value="InterPro"/>
</dbReference>
<dbReference type="GO" id="GO:0036001">
    <property type="term" value="P:'de novo' pyridoxal 5'-phosphate biosynthetic process"/>
    <property type="evidence" value="ECO:0007669"/>
    <property type="project" value="TreeGrafter"/>
</dbReference>
<dbReference type="GO" id="GO:0008615">
    <property type="term" value="P:pyridoxine biosynthetic process"/>
    <property type="evidence" value="ECO:0007669"/>
    <property type="project" value="UniProtKB-UniRule"/>
</dbReference>
<dbReference type="CDD" id="cd12158">
    <property type="entry name" value="ErythrP_dh"/>
    <property type="match status" value="1"/>
</dbReference>
<dbReference type="Gene3D" id="3.30.1370.170">
    <property type="match status" value="1"/>
</dbReference>
<dbReference type="Gene3D" id="3.40.50.720">
    <property type="entry name" value="NAD(P)-binding Rossmann-like Domain"/>
    <property type="match status" value="2"/>
</dbReference>
<dbReference type="HAMAP" id="MF_01825">
    <property type="entry name" value="PdxB"/>
    <property type="match status" value="1"/>
</dbReference>
<dbReference type="InterPro" id="IPR006139">
    <property type="entry name" value="D-isomer_2_OHA_DH_cat_dom"/>
</dbReference>
<dbReference type="InterPro" id="IPR029752">
    <property type="entry name" value="D-isomer_DH_CS1"/>
</dbReference>
<dbReference type="InterPro" id="IPR006140">
    <property type="entry name" value="D-isomer_DH_NAD-bd"/>
</dbReference>
<dbReference type="InterPro" id="IPR020921">
    <property type="entry name" value="Erythronate-4-P_DHase"/>
</dbReference>
<dbReference type="InterPro" id="IPR024531">
    <property type="entry name" value="Erythronate-4-P_DHase_dimer"/>
</dbReference>
<dbReference type="InterPro" id="IPR036291">
    <property type="entry name" value="NAD(P)-bd_dom_sf"/>
</dbReference>
<dbReference type="InterPro" id="IPR038251">
    <property type="entry name" value="PdxB_dimer_sf"/>
</dbReference>
<dbReference type="PANTHER" id="PTHR42938">
    <property type="entry name" value="FORMATE DEHYDROGENASE 1"/>
    <property type="match status" value="1"/>
</dbReference>
<dbReference type="PANTHER" id="PTHR42938:SF9">
    <property type="entry name" value="FORMATE DEHYDROGENASE 1"/>
    <property type="match status" value="1"/>
</dbReference>
<dbReference type="Pfam" id="PF00389">
    <property type="entry name" value="2-Hacid_dh"/>
    <property type="match status" value="1"/>
</dbReference>
<dbReference type="Pfam" id="PF02826">
    <property type="entry name" value="2-Hacid_dh_C"/>
    <property type="match status" value="1"/>
</dbReference>
<dbReference type="Pfam" id="PF11890">
    <property type="entry name" value="DUF3410"/>
    <property type="match status" value="1"/>
</dbReference>
<dbReference type="SUPFAM" id="SSF52283">
    <property type="entry name" value="Formate/glycerate dehydrogenase catalytic domain-like"/>
    <property type="match status" value="1"/>
</dbReference>
<dbReference type="SUPFAM" id="SSF51735">
    <property type="entry name" value="NAD(P)-binding Rossmann-fold domains"/>
    <property type="match status" value="1"/>
</dbReference>
<dbReference type="PROSITE" id="PS00065">
    <property type="entry name" value="D_2_HYDROXYACID_DH_1"/>
    <property type="match status" value="1"/>
</dbReference>
<evidence type="ECO:0000255" key="1">
    <source>
        <dbReference type="HAMAP-Rule" id="MF_01825"/>
    </source>
</evidence>
<accession>A6VXM3</accession>
<protein>
    <recommendedName>
        <fullName evidence="1">Erythronate-4-phosphate dehydrogenase</fullName>
        <ecNumber evidence="1">1.1.1.290</ecNumber>
    </recommendedName>
</protein>
<reference key="1">
    <citation type="submission" date="2007-06" db="EMBL/GenBank/DDBJ databases">
        <title>Complete sequence of Marinomonas sp. MWYL1.</title>
        <authorList>
            <consortium name="US DOE Joint Genome Institute"/>
            <person name="Copeland A."/>
            <person name="Lucas S."/>
            <person name="Lapidus A."/>
            <person name="Barry K."/>
            <person name="Glavina del Rio T."/>
            <person name="Dalin E."/>
            <person name="Tice H."/>
            <person name="Pitluck S."/>
            <person name="Kiss H."/>
            <person name="Brettin T."/>
            <person name="Bruce D."/>
            <person name="Detter J.C."/>
            <person name="Han C."/>
            <person name="Schmutz J."/>
            <person name="Larimer F."/>
            <person name="Land M."/>
            <person name="Hauser L."/>
            <person name="Kyrpides N."/>
            <person name="Kim E."/>
            <person name="Johnston A.W.B."/>
            <person name="Todd J.D."/>
            <person name="Rogers R."/>
            <person name="Wexler M."/>
            <person name="Bond P.L."/>
            <person name="Li Y."/>
            <person name="Richardson P."/>
        </authorList>
    </citation>
    <scope>NUCLEOTIDE SEQUENCE [LARGE SCALE GENOMIC DNA]</scope>
    <source>
        <strain>MWYL1</strain>
    </source>
</reference>
<comment type="function">
    <text evidence="1">Catalyzes the oxidation of erythronate-4-phosphate to 3-hydroxy-2-oxo-4-phosphonooxybutanoate.</text>
</comment>
<comment type="catalytic activity">
    <reaction evidence="1">
        <text>4-phospho-D-erythronate + NAD(+) = (R)-3-hydroxy-2-oxo-4-phosphooxybutanoate + NADH + H(+)</text>
        <dbReference type="Rhea" id="RHEA:18829"/>
        <dbReference type="ChEBI" id="CHEBI:15378"/>
        <dbReference type="ChEBI" id="CHEBI:57540"/>
        <dbReference type="ChEBI" id="CHEBI:57945"/>
        <dbReference type="ChEBI" id="CHEBI:58538"/>
        <dbReference type="ChEBI" id="CHEBI:58766"/>
        <dbReference type="EC" id="1.1.1.290"/>
    </reaction>
</comment>
<comment type="pathway">
    <text evidence="1">Cofactor biosynthesis; pyridoxine 5'-phosphate biosynthesis; pyridoxine 5'-phosphate from D-erythrose 4-phosphate: step 2/5.</text>
</comment>
<comment type="subunit">
    <text evidence="1">Homodimer.</text>
</comment>
<comment type="subcellular location">
    <subcellularLocation>
        <location evidence="1">Cytoplasm</location>
    </subcellularLocation>
</comment>
<comment type="similarity">
    <text evidence="1">Belongs to the D-isomer specific 2-hydroxyacid dehydrogenase family. PdxB subfamily.</text>
</comment>
<gene>
    <name evidence="1" type="primary">pdxB</name>
    <name type="ordered locus">Mmwyl1_2280</name>
</gene>
<sequence>MKIIADENMPNAKVLFSHLGDVELVNGRTLTHEQVREADVLLVRSVTKVTKELLEGSSVRFVGSATIGVDHIDLDYLSKANIGFSSAPGCNAEAVADYVFSALSHLYLTKKINWLSKKIGVIGYGNVGKTVYTRFANMGCQVHVYDPIREKEGGSANFVSLDEILSCDVISLHAPLTHTGSYPTKGMIGRKELAKLSAGVTIISAGRGGVIDESALFDRHKQLNGNLHLVLDVWDGEPAINQKLIAIVDIATPHIAGYSKQGREKGTWMVYQALCQYLALDANVISKHDAISAGWLSFVNVSAEEPQEEMLARSMHAIYDVSRDDIRLRFKYRENKEKNVFDWLRKHYVERDEFNTCIIGVSSSDASNLMSAAGFSVDNK</sequence>